<evidence type="ECO:0000255" key="1">
    <source>
        <dbReference type="HAMAP-Rule" id="MF_00057"/>
    </source>
</evidence>
<organism>
    <name type="scientific">Burkholderia ambifaria (strain MC40-6)</name>
    <dbReference type="NCBI Taxonomy" id="398577"/>
    <lineage>
        <taxon>Bacteria</taxon>
        <taxon>Pseudomonadati</taxon>
        <taxon>Pseudomonadota</taxon>
        <taxon>Betaproteobacteria</taxon>
        <taxon>Burkholderiales</taxon>
        <taxon>Burkholderiaceae</taxon>
        <taxon>Burkholderia</taxon>
        <taxon>Burkholderia cepacia complex</taxon>
    </lineage>
</organism>
<name>KDSB2_BURA4</name>
<keyword id="KW-0963">Cytoplasm</keyword>
<keyword id="KW-0448">Lipopolysaccharide biosynthesis</keyword>
<keyword id="KW-0548">Nucleotidyltransferase</keyword>
<keyword id="KW-0808">Transferase</keyword>
<proteinExistence type="inferred from homology"/>
<reference key="1">
    <citation type="submission" date="2008-04" db="EMBL/GenBank/DDBJ databases">
        <title>Complete sequence of chromosome 3 of Burkholderia ambifaria MC40-6.</title>
        <authorList>
            <person name="Copeland A."/>
            <person name="Lucas S."/>
            <person name="Lapidus A."/>
            <person name="Glavina del Rio T."/>
            <person name="Dalin E."/>
            <person name="Tice H."/>
            <person name="Pitluck S."/>
            <person name="Chain P."/>
            <person name="Malfatti S."/>
            <person name="Shin M."/>
            <person name="Vergez L."/>
            <person name="Lang D."/>
            <person name="Schmutz J."/>
            <person name="Larimer F."/>
            <person name="Land M."/>
            <person name="Hauser L."/>
            <person name="Kyrpides N."/>
            <person name="Lykidis A."/>
            <person name="Ramette A."/>
            <person name="Konstantinidis K."/>
            <person name="Tiedje J."/>
            <person name="Richardson P."/>
        </authorList>
    </citation>
    <scope>NUCLEOTIDE SEQUENCE [LARGE SCALE GENOMIC DNA]</scope>
    <source>
        <strain>MC40-6</strain>
    </source>
</reference>
<gene>
    <name evidence="1" type="primary">kdsB2</name>
    <name type="ordered locus">BamMC406_5915</name>
</gene>
<protein>
    <recommendedName>
        <fullName evidence="1">3-deoxy-manno-octulosonate cytidylyltransferase 2</fullName>
        <ecNumber evidence="1">2.7.7.38</ecNumber>
    </recommendedName>
    <alternativeName>
        <fullName evidence="1">CMP-2-keto-3-deoxyoctulosonic acid synthase 2</fullName>
        <shortName evidence="1">CKS 2</shortName>
        <shortName evidence="1">CMP-KDO synthase 2</shortName>
    </alternativeName>
</protein>
<comment type="function">
    <text evidence="1">Activates KDO (a required 8-carbon sugar) for incorporation into bacterial lipopolysaccharide in Gram-negative bacteria.</text>
</comment>
<comment type="catalytic activity">
    <reaction evidence="1">
        <text>3-deoxy-alpha-D-manno-oct-2-ulosonate + CTP = CMP-3-deoxy-beta-D-manno-octulosonate + diphosphate</text>
        <dbReference type="Rhea" id="RHEA:23448"/>
        <dbReference type="ChEBI" id="CHEBI:33019"/>
        <dbReference type="ChEBI" id="CHEBI:37563"/>
        <dbReference type="ChEBI" id="CHEBI:85986"/>
        <dbReference type="ChEBI" id="CHEBI:85987"/>
        <dbReference type="EC" id="2.7.7.38"/>
    </reaction>
</comment>
<comment type="pathway">
    <text evidence="1">Nucleotide-sugar biosynthesis; CMP-3-deoxy-D-manno-octulosonate biosynthesis; CMP-3-deoxy-D-manno-octulosonate from 3-deoxy-D-manno-octulosonate and CTP: step 1/1.</text>
</comment>
<comment type="pathway">
    <text evidence="1">Bacterial outer membrane biogenesis; lipopolysaccharide biosynthesis.</text>
</comment>
<comment type="subcellular location">
    <subcellularLocation>
        <location evidence="1">Cytoplasm</location>
    </subcellularLocation>
</comment>
<comment type="similarity">
    <text evidence="1">Belongs to the KdsB family.</text>
</comment>
<accession>B1Z3N9</accession>
<feature type="chain" id="PRO_0000370022" description="3-deoxy-manno-octulosonate cytidylyltransferase 2">
    <location>
        <begin position="1"/>
        <end position="267"/>
    </location>
</feature>
<sequence length="267" mass="28662">MTSFNDGRTVHVVIPARYGSTRLPGKPLVDLEGEPMIVRVHARVRRALPEADIVVAIDDARIAEVLDARGIRFAMTDTGHASGTDRAAEVARVSGWPDTDAVLNVQGDEPLVPTALLQAFAGFCGATAALGVATVACPIGEVALLDEPAIVKVVVDHRGRALYFSRAAIPFCRDGRPADSAGSNGLFLRHIGLYGYTNATLQALSRAAPCELEQLEKLEQLRALWLGMPIDVMRWPDAPPAGIDTPDDVARVVSLLKRQTHDATEPY</sequence>
<dbReference type="EC" id="2.7.7.38" evidence="1"/>
<dbReference type="EMBL" id="CP001027">
    <property type="protein sequence ID" value="ACB68352.1"/>
    <property type="molecule type" value="Genomic_DNA"/>
</dbReference>
<dbReference type="RefSeq" id="WP_012372260.1">
    <property type="nucleotide sequence ID" value="NC_010557.1"/>
</dbReference>
<dbReference type="SMR" id="B1Z3N9"/>
<dbReference type="KEGG" id="bac:BamMC406_5915"/>
<dbReference type="HOGENOM" id="CLU_065038_1_0_4"/>
<dbReference type="OrthoDB" id="9815559at2"/>
<dbReference type="UniPathway" id="UPA00030"/>
<dbReference type="UniPathway" id="UPA00358">
    <property type="reaction ID" value="UER00476"/>
</dbReference>
<dbReference type="Proteomes" id="UP000001680">
    <property type="component" value="Chromosome 3"/>
</dbReference>
<dbReference type="GO" id="GO:0005829">
    <property type="term" value="C:cytosol"/>
    <property type="evidence" value="ECO:0007669"/>
    <property type="project" value="TreeGrafter"/>
</dbReference>
<dbReference type="GO" id="GO:0008690">
    <property type="term" value="F:3-deoxy-manno-octulosonate cytidylyltransferase activity"/>
    <property type="evidence" value="ECO:0007669"/>
    <property type="project" value="UniProtKB-UniRule"/>
</dbReference>
<dbReference type="GO" id="GO:0033468">
    <property type="term" value="P:CMP-keto-3-deoxy-D-manno-octulosonic acid biosynthetic process"/>
    <property type="evidence" value="ECO:0007669"/>
    <property type="project" value="UniProtKB-UniRule"/>
</dbReference>
<dbReference type="GO" id="GO:0009103">
    <property type="term" value="P:lipopolysaccharide biosynthetic process"/>
    <property type="evidence" value="ECO:0007669"/>
    <property type="project" value="UniProtKB-UniRule"/>
</dbReference>
<dbReference type="CDD" id="cd02517">
    <property type="entry name" value="CMP-KDO-Synthetase"/>
    <property type="match status" value="1"/>
</dbReference>
<dbReference type="Gene3D" id="3.90.550.10">
    <property type="entry name" value="Spore Coat Polysaccharide Biosynthesis Protein SpsA, Chain A"/>
    <property type="match status" value="1"/>
</dbReference>
<dbReference type="HAMAP" id="MF_00057">
    <property type="entry name" value="KdsB"/>
    <property type="match status" value="1"/>
</dbReference>
<dbReference type="InterPro" id="IPR003329">
    <property type="entry name" value="Cytidylyl_trans"/>
</dbReference>
<dbReference type="InterPro" id="IPR004528">
    <property type="entry name" value="KdsB"/>
</dbReference>
<dbReference type="InterPro" id="IPR029044">
    <property type="entry name" value="Nucleotide-diphossugar_trans"/>
</dbReference>
<dbReference type="NCBIfam" id="TIGR00466">
    <property type="entry name" value="kdsB"/>
    <property type="match status" value="1"/>
</dbReference>
<dbReference type="NCBIfam" id="NF003952">
    <property type="entry name" value="PRK05450.1-5"/>
    <property type="match status" value="1"/>
</dbReference>
<dbReference type="PANTHER" id="PTHR42866">
    <property type="entry name" value="3-DEOXY-MANNO-OCTULOSONATE CYTIDYLYLTRANSFERASE"/>
    <property type="match status" value="1"/>
</dbReference>
<dbReference type="PANTHER" id="PTHR42866:SF2">
    <property type="entry name" value="3-DEOXY-MANNO-OCTULOSONATE CYTIDYLYLTRANSFERASE, MITOCHONDRIAL"/>
    <property type="match status" value="1"/>
</dbReference>
<dbReference type="Pfam" id="PF02348">
    <property type="entry name" value="CTP_transf_3"/>
    <property type="match status" value="1"/>
</dbReference>
<dbReference type="SUPFAM" id="SSF53448">
    <property type="entry name" value="Nucleotide-diphospho-sugar transferases"/>
    <property type="match status" value="1"/>
</dbReference>